<proteinExistence type="evidence at protein level"/>
<organism>
    <name type="scientific">Mus musculus</name>
    <name type="common">Mouse</name>
    <dbReference type="NCBI Taxonomy" id="10090"/>
    <lineage>
        <taxon>Eukaryota</taxon>
        <taxon>Metazoa</taxon>
        <taxon>Chordata</taxon>
        <taxon>Craniata</taxon>
        <taxon>Vertebrata</taxon>
        <taxon>Euteleostomi</taxon>
        <taxon>Mammalia</taxon>
        <taxon>Eutheria</taxon>
        <taxon>Euarchontoglires</taxon>
        <taxon>Glires</taxon>
        <taxon>Rodentia</taxon>
        <taxon>Myomorpha</taxon>
        <taxon>Muroidea</taxon>
        <taxon>Muridae</taxon>
        <taxon>Murinae</taxon>
        <taxon>Mus</taxon>
        <taxon>Mus</taxon>
    </lineage>
</organism>
<comment type="function">
    <text evidence="1 4 5">Catalytic subunit of the alternative triglyceride biosynthesis pathway, which mediates formation of triacylglycerol from diacylglycerol and membrane phospholipids (By similarity). Synthesizes triacylglycerol at the expense of membrane phospholipids, such as phosphatidylcholine (PC) and its ether-linked form (ePC), thereby altering the composition of membranes (By similarity). The alternative triglyceride biosynthesis pathway is probably required to provide the energy required for rapid growth when fuel sources are limiting (PubMed:37648867). It maintains mitochondrial function during periods of extracellular lipid starvation (PubMed:37648867). Can also use acyl-CoA as donor: acts as a acyl-CoA:monoacylglycerol acyltransferase (MGAT), but also shows acyl-CoA:diacylglycerol acyltransferase (DGAT) activity (PubMed:36768334).</text>
</comment>
<comment type="catalytic activity">
    <reaction evidence="1">
        <text>a 1,2-diacylglycerol + a 1,2-diacyl-sn-glycero-3-phosphocholine = a triacylglycerol + a 1-acyl-sn-glycero-3-phosphocholine</text>
        <dbReference type="Rhea" id="RHEA:77743"/>
        <dbReference type="ChEBI" id="CHEBI:17855"/>
        <dbReference type="ChEBI" id="CHEBI:49172"/>
        <dbReference type="ChEBI" id="CHEBI:57643"/>
        <dbReference type="ChEBI" id="CHEBI:58168"/>
    </reaction>
    <physiologicalReaction direction="left-to-right" evidence="1">
        <dbReference type="Rhea" id="RHEA:77744"/>
    </physiologicalReaction>
</comment>
<comment type="catalytic activity">
    <reaction evidence="1">
        <text>a 1-O-alkyl-2-acyl-sn-glycero-3-phosphocholine + a 1,2-diacylglycerol = a 1-O-alkyl-sn-glycero-3-phosphocholine + a triacylglycerol</text>
        <dbReference type="Rhea" id="RHEA:77759"/>
        <dbReference type="ChEBI" id="CHEBI:17855"/>
        <dbReference type="ChEBI" id="CHEBI:30909"/>
        <dbReference type="ChEBI" id="CHEBI:36702"/>
        <dbReference type="ChEBI" id="CHEBI:49172"/>
    </reaction>
    <physiologicalReaction direction="left-to-right" evidence="1">
        <dbReference type="Rhea" id="RHEA:77760"/>
    </physiologicalReaction>
</comment>
<comment type="catalytic activity">
    <reaction evidence="4">
        <text>a 2-acylglycerol + an acyl-CoA = a 1,2-diacylglycerol + CoA</text>
        <dbReference type="Rhea" id="RHEA:16741"/>
        <dbReference type="ChEBI" id="CHEBI:17389"/>
        <dbReference type="ChEBI" id="CHEBI:49172"/>
        <dbReference type="ChEBI" id="CHEBI:57287"/>
        <dbReference type="ChEBI" id="CHEBI:58342"/>
        <dbReference type="EC" id="2.3.1.22"/>
    </reaction>
    <physiologicalReaction direction="left-to-right" evidence="4">
        <dbReference type="Rhea" id="RHEA:16742"/>
    </physiologicalReaction>
</comment>
<comment type="catalytic activity">
    <reaction evidence="4">
        <text>an acyl-CoA + a 1,2-diacyl-sn-glycerol = a triacyl-sn-glycerol + CoA</text>
        <dbReference type="Rhea" id="RHEA:10868"/>
        <dbReference type="ChEBI" id="CHEBI:17815"/>
        <dbReference type="ChEBI" id="CHEBI:57287"/>
        <dbReference type="ChEBI" id="CHEBI:58342"/>
        <dbReference type="ChEBI" id="CHEBI:64615"/>
        <dbReference type="EC" id="2.3.1.20"/>
    </reaction>
    <physiologicalReaction direction="left-to-right" evidence="4">
        <dbReference type="Rhea" id="RHEA:10869"/>
    </physiologicalReaction>
</comment>
<comment type="catalytic activity">
    <reaction evidence="4">
        <text>2-(9Z-octadecenoyl)-glycerol + (9Z)-octadecenoyl-CoA = 1,2-di-(9Z-octadecenoyl)-glycerol + CoA</text>
        <dbReference type="Rhea" id="RHEA:39951"/>
        <dbReference type="ChEBI" id="CHEBI:52323"/>
        <dbReference type="ChEBI" id="CHEBI:57287"/>
        <dbReference type="ChEBI" id="CHEBI:57387"/>
        <dbReference type="ChEBI" id="CHEBI:73990"/>
    </reaction>
    <physiologicalReaction direction="left-to-right" evidence="4">
        <dbReference type="Rhea" id="RHEA:39952"/>
    </physiologicalReaction>
</comment>
<comment type="catalytic activity">
    <reaction evidence="4">
        <text>1,2-di-(9Z-octadecenoyl)-sn-glycerol + (9Z)-octadecenoyl-CoA = 1,2,3-tri-(9Z-octadecenoyl)-glycerol + CoA</text>
        <dbReference type="Rhea" id="RHEA:38219"/>
        <dbReference type="ChEBI" id="CHEBI:52333"/>
        <dbReference type="ChEBI" id="CHEBI:53753"/>
        <dbReference type="ChEBI" id="CHEBI:57287"/>
        <dbReference type="ChEBI" id="CHEBI:57387"/>
    </reaction>
    <physiologicalReaction direction="left-to-right" evidence="4">
        <dbReference type="Rhea" id="RHEA:38220"/>
    </physiologicalReaction>
</comment>
<comment type="activity regulation">
    <text evidence="1">Acyltransferase activity is specifically inhibited by TMX1 at the endoplasmic reticulum, restricting accumulation of triacylglycerol.</text>
</comment>
<comment type="subcellular location">
    <subcellularLocation>
        <location evidence="3 4">Endoplasmic reticulum membrane</location>
        <topology evidence="10">Multi-pass membrane protein</topology>
    </subcellularLocation>
</comment>
<comment type="alternative products">
    <event type="alternative splicing"/>
    <isoform>
        <id>Q9D850-1</id>
        <name>1</name>
        <sequence type="displayed"/>
    </isoform>
    <isoform>
        <id>Q9D850-2</id>
        <name>2</name>
        <sequence type="described" ref="VSP_021247 VSP_021248"/>
    </isoform>
</comment>
<comment type="tissue specificity">
    <text evidence="3">Widely expressed, with highest level in the brain, followed by lung and duodenum, and lowest levels in tongue, testis, skin and ileum.</text>
</comment>
<comment type="disruption phenotype">
    <text evidence="5">Mice are indistinguishable from their wild-type counterparts 1 week after birth but grow at a much slower rate between weeks 4 and 4 (PubMed:37648867). The weight difference observed after 4 weeks is maintained throughout adulthood, suggesting that it is required to support rapid growth at a specific time point after birth, which coincides with a dietary switch from milk to chow (PubMed:37648867). ells shown decreased triacylglycerol levels at 3.5 weeks of age (PubMed:37648867).</text>
</comment>
<comment type="similarity">
    <text evidence="11">Belongs to the diacylglycerol acyltransferase family. Highly divergent.</text>
</comment>
<feature type="chain" id="PRO_0000254593" description="DGAT1/2-independent enzyme synthesizing storage lipids">
    <location>
        <begin position="1"/>
        <end position="329"/>
    </location>
</feature>
<feature type="topological domain" description="Lumenal" evidence="9">
    <location>
        <begin position="1"/>
        <end position="50"/>
    </location>
</feature>
<feature type="transmembrane region" description="Helical" evidence="2">
    <location>
        <begin position="51"/>
        <end position="71"/>
    </location>
</feature>
<feature type="topological domain" description="Cytoplasmic" evidence="9">
    <location>
        <begin position="72"/>
        <end position="120"/>
    </location>
</feature>
<feature type="transmembrane region" description="Helical" evidence="2">
    <location>
        <begin position="121"/>
        <end position="141"/>
    </location>
</feature>
<feature type="topological domain" description="Lumenal" evidence="9">
    <location>
        <begin position="142"/>
        <end position="329"/>
    </location>
</feature>
<feature type="active site" evidence="1">
    <location>
        <position position="129"/>
    </location>
</feature>
<feature type="glycosylation site" description="N-linked (GlcNAc...) asparagine" evidence="2">
    <location>
        <position position="5"/>
    </location>
</feature>
<feature type="splice variant" id="VSP_021247" description="In isoform 2." evidence="6">
    <original>GFSLLLD</original>
    <variation>VETSQES</variation>
    <location>
        <begin position="164"/>
        <end position="170"/>
    </location>
</feature>
<feature type="splice variant" id="VSP_021248" description="In isoform 2." evidence="6">
    <location>
        <begin position="171"/>
        <end position="329"/>
    </location>
</feature>
<feature type="sequence conflict" description="In Ref. 1; BAE28123." evidence="9" ref="1">
    <original>V</original>
    <variation>M</variation>
    <location>
        <position position="24"/>
    </location>
</feature>
<accession>Q9D850</accession>
<accession>Q3UGT4</accession>
<accession>Q8BTV3</accession>
<name>DIESL_MOUSE</name>
<dbReference type="EC" id="2.3.1.-" evidence="1"/>
<dbReference type="EC" id="2.3.1.20" evidence="4"/>
<dbReference type="EC" id="2.3.1.22" evidence="4"/>
<dbReference type="EMBL" id="AK008493">
    <property type="protein sequence ID" value="BAB25698.1"/>
    <property type="molecule type" value="mRNA"/>
</dbReference>
<dbReference type="EMBL" id="AK048210">
    <property type="protein sequence ID" value="BAC33273.1"/>
    <property type="molecule type" value="mRNA"/>
</dbReference>
<dbReference type="EMBL" id="AK084881">
    <property type="protein sequence ID" value="BAC39301.1"/>
    <property type="molecule type" value="mRNA"/>
</dbReference>
<dbReference type="EMBL" id="AK088600">
    <property type="protein sequence ID" value="BAC40445.1"/>
    <property type="molecule type" value="mRNA"/>
</dbReference>
<dbReference type="EMBL" id="AK147765">
    <property type="protein sequence ID" value="BAE28123.1"/>
    <property type="molecule type" value="mRNA"/>
</dbReference>
<dbReference type="EMBL" id="AK162563">
    <property type="protein sequence ID" value="BAE36969.1"/>
    <property type="molecule type" value="mRNA"/>
</dbReference>
<dbReference type="EMBL" id="AK165916">
    <property type="protein sequence ID" value="BAE38459.1"/>
    <property type="molecule type" value="mRNA"/>
</dbReference>
<dbReference type="EMBL" id="AK166237">
    <property type="protein sequence ID" value="BAE38652.1"/>
    <property type="molecule type" value="mRNA"/>
</dbReference>
<dbReference type="EMBL" id="BC016240">
    <property type="protein sequence ID" value="AAH16240.1"/>
    <property type="molecule type" value="mRNA"/>
</dbReference>
<dbReference type="CCDS" id="CCDS17937.1">
    <molecule id="Q9D850-1"/>
</dbReference>
<dbReference type="RefSeq" id="NP_082373.1">
    <molecule id="Q9D850-1"/>
    <property type="nucleotide sequence ID" value="NM_028097.4"/>
</dbReference>
<dbReference type="SMR" id="Q9D850"/>
<dbReference type="BioGRID" id="215151">
    <property type="interactions" value="2"/>
</dbReference>
<dbReference type="FunCoup" id="Q9D850">
    <property type="interactions" value="564"/>
</dbReference>
<dbReference type="STRING" id="10090.ENSMUSP00000029891"/>
<dbReference type="GlyGen" id="Q9D850">
    <property type="glycosylation" value="1 site"/>
</dbReference>
<dbReference type="PhosphoSitePlus" id="Q9D850"/>
<dbReference type="SwissPalm" id="Q9D850"/>
<dbReference type="PaxDb" id="10090-ENSMUSP00000029891"/>
<dbReference type="PeptideAtlas" id="Q9D850"/>
<dbReference type="ProteomicsDB" id="259587">
    <molecule id="Q9D850-1"/>
</dbReference>
<dbReference type="ProteomicsDB" id="259588">
    <molecule id="Q9D850-2"/>
</dbReference>
<dbReference type="Antibodypedia" id="11708">
    <property type="antibodies" value="56 antibodies from 15 providers"/>
</dbReference>
<dbReference type="DNASU" id="72098"/>
<dbReference type="Ensembl" id="ENSMUST00000029891.12">
    <molecule id="Q9D850-1"/>
    <property type="protein sequence ID" value="ENSMUSP00000029891.6"/>
    <property type="gene ID" value="ENSMUSG00000028232.14"/>
</dbReference>
<dbReference type="Ensembl" id="ENSMUST00000154922.8">
    <molecule id="Q9D850-2"/>
    <property type="protein sequence ID" value="ENSMUSP00000123591.2"/>
    <property type="gene ID" value="ENSMUSG00000028232.14"/>
</dbReference>
<dbReference type="GeneID" id="72098"/>
<dbReference type="KEGG" id="mmu:72098"/>
<dbReference type="UCSC" id="uc008rwh.1">
    <molecule id="Q9D850-1"/>
    <property type="organism name" value="mouse"/>
</dbReference>
<dbReference type="AGR" id="MGI:1919348"/>
<dbReference type="CTD" id="137695"/>
<dbReference type="MGI" id="MGI:1919348">
    <property type="gene designation" value="Tmem68"/>
</dbReference>
<dbReference type="VEuPathDB" id="HostDB:ENSMUSG00000028232"/>
<dbReference type="eggNOG" id="KOG4321">
    <property type="taxonomic scope" value="Eukaryota"/>
</dbReference>
<dbReference type="GeneTree" id="ENSGT00390000011782"/>
<dbReference type="HOGENOM" id="CLU_136529_0_0_1"/>
<dbReference type="InParanoid" id="Q9D850"/>
<dbReference type="OMA" id="SYWNGAR"/>
<dbReference type="OrthoDB" id="44277at2759"/>
<dbReference type="PhylomeDB" id="Q9D850"/>
<dbReference type="TreeFam" id="TF312828"/>
<dbReference type="BioGRID-ORCS" id="72098">
    <property type="hits" value="0 hits in 76 CRISPR screens"/>
</dbReference>
<dbReference type="PRO" id="PR:Q9D850"/>
<dbReference type="Proteomes" id="UP000000589">
    <property type="component" value="Chromosome 4"/>
</dbReference>
<dbReference type="RNAct" id="Q9D850">
    <property type="molecule type" value="protein"/>
</dbReference>
<dbReference type="Bgee" id="ENSMUSG00000028232">
    <property type="expression patterns" value="Expressed in metanephric cortical collecting duct and 261 other cell types or tissues"/>
</dbReference>
<dbReference type="ExpressionAtlas" id="Q9D850">
    <property type="expression patterns" value="baseline and differential"/>
</dbReference>
<dbReference type="GO" id="GO:0005789">
    <property type="term" value="C:endoplasmic reticulum membrane"/>
    <property type="evidence" value="ECO:0000250"/>
    <property type="project" value="UniProtKB"/>
</dbReference>
<dbReference type="GO" id="GO:0046027">
    <property type="term" value="F:phospholipid:diacylglycerol acyltransferase activity"/>
    <property type="evidence" value="ECO:0000250"/>
    <property type="project" value="UniProtKB"/>
</dbReference>
<dbReference type="GO" id="GO:0019432">
    <property type="term" value="P:triglyceride biosynthetic process"/>
    <property type="evidence" value="ECO:0000250"/>
    <property type="project" value="UniProtKB"/>
</dbReference>
<dbReference type="CDD" id="cd07987">
    <property type="entry name" value="LPLAT_MGAT-like"/>
    <property type="match status" value="1"/>
</dbReference>
<dbReference type="InterPro" id="IPR002123">
    <property type="entry name" value="Plipid/glycerol_acylTrfase"/>
</dbReference>
<dbReference type="PANTHER" id="PTHR22753:SF14">
    <property type="entry name" value="MONOACYLGLYCEROL_DIACYLGLYCEROL O-ACYLTRANSFERASE"/>
    <property type="match status" value="1"/>
</dbReference>
<dbReference type="PANTHER" id="PTHR22753">
    <property type="entry name" value="TRANSMEMBRANE PROTEIN 68"/>
    <property type="match status" value="1"/>
</dbReference>
<dbReference type="Pfam" id="PF01553">
    <property type="entry name" value="Acyltransferase"/>
    <property type="match status" value="1"/>
</dbReference>
<dbReference type="SUPFAM" id="SSF69593">
    <property type="entry name" value="Glycerol-3-phosphate (1)-acyltransferase"/>
    <property type="match status" value="1"/>
</dbReference>
<keyword id="KW-0012">Acyltransferase</keyword>
<keyword id="KW-0025">Alternative splicing</keyword>
<keyword id="KW-0256">Endoplasmic reticulum</keyword>
<keyword id="KW-0325">Glycoprotein</keyword>
<keyword id="KW-0443">Lipid metabolism</keyword>
<keyword id="KW-0472">Membrane</keyword>
<keyword id="KW-1185">Reference proteome</keyword>
<keyword id="KW-0808">Transferase</keyword>
<keyword id="KW-0812">Transmembrane</keyword>
<keyword id="KW-1133">Transmembrane helix</keyword>
<sequence length="329" mass="37810">MIDNNQTCAAGQDSVPYVTCMIYVLEEWLGVEQLEDYLNFANHLLWVFTPLILLILPYFTIFLLYLTIIFLHIYKRKNVLKEAYSHNLWDGARKTVATLWDGHAAVWHGYEVHGMEKIPEGAALIIFYHGAIPIDFYYFMAKIFIQKGRTCRVVADHFVFKIPGFSLLLDVFCALHGPREKCVEILRSGHLLAISPGGVREALLSDETYNIIWGNRKGFAQVAIDAKVPIIPMFTQNIREGFRSLGGTRLFKWLYEKFRYPFAPMYGGFPVKLRTFLGDPIPYDPKVTAEELAEKTKNAVQALIDKHQRIPGNIRSALLDRFHKEQKAH</sequence>
<gene>
    <name evidence="7 8 12" type="primary">Tmem68</name>
</gene>
<evidence type="ECO:0000250" key="1">
    <source>
        <dbReference type="UniProtKB" id="Q96MH6"/>
    </source>
</evidence>
<evidence type="ECO:0000255" key="2"/>
<evidence type="ECO:0000269" key="3">
    <source>
    </source>
</evidence>
<evidence type="ECO:0000269" key="4">
    <source>
    </source>
</evidence>
<evidence type="ECO:0000269" key="5">
    <source>
    </source>
</evidence>
<evidence type="ECO:0000303" key="6">
    <source>
    </source>
</evidence>
<evidence type="ECO:0000303" key="7">
    <source>
    </source>
</evidence>
<evidence type="ECO:0000303" key="8">
    <source>
    </source>
</evidence>
<evidence type="ECO:0000305" key="9"/>
<evidence type="ECO:0000305" key="10">
    <source>
    </source>
</evidence>
<evidence type="ECO:0000305" key="11">
    <source>
    </source>
</evidence>
<evidence type="ECO:0000312" key="12">
    <source>
        <dbReference type="MGI" id="MGI:1919348"/>
    </source>
</evidence>
<protein>
    <recommendedName>
        <fullName evidence="1">DGAT1/2-independent enzyme synthesizing storage lipids</fullName>
        <shortName evidence="1">DIESL</shortName>
        <ecNumber evidence="1">2.3.1.-</ecNumber>
    </recommendedName>
    <alternativeName>
        <fullName>2-acylglycerol/1,2-diacylglycerol O-acyltransferase</fullName>
    </alternativeName>
    <alternativeName>
        <fullName>Monoacylglycerol/Diacylglycerol O-acyltransferase</fullName>
        <shortName>MGAT/DGAT</shortName>
        <ecNumber evidence="4">2.3.1.20</ecNumber>
        <ecNumber evidence="4">2.3.1.22</ecNumber>
    </alternativeName>
    <alternativeName>
        <fullName evidence="7 8">Transmembrane protein 68</fullName>
    </alternativeName>
</protein>
<reference key="1">
    <citation type="journal article" date="2005" name="Science">
        <title>The transcriptional landscape of the mammalian genome.</title>
        <authorList>
            <person name="Carninci P."/>
            <person name="Kasukawa T."/>
            <person name="Katayama S."/>
            <person name="Gough J."/>
            <person name="Frith M.C."/>
            <person name="Maeda N."/>
            <person name="Oyama R."/>
            <person name="Ravasi T."/>
            <person name="Lenhard B."/>
            <person name="Wells C."/>
            <person name="Kodzius R."/>
            <person name="Shimokawa K."/>
            <person name="Bajic V.B."/>
            <person name="Brenner S.E."/>
            <person name="Batalov S."/>
            <person name="Forrest A.R."/>
            <person name="Zavolan M."/>
            <person name="Davis M.J."/>
            <person name="Wilming L.G."/>
            <person name="Aidinis V."/>
            <person name="Allen J.E."/>
            <person name="Ambesi-Impiombato A."/>
            <person name="Apweiler R."/>
            <person name="Aturaliya R.N."/>
            <person name="Bailey T.L."/>
            <person name="Bansal M."/>
            <person name="Baxter L."/>
            <person name="Beisel K.W."/>
            <person name="Bersano T."/>
            <person name="Bono H."/>
            <person name="Chalk A.M."/>
            <person name="Chiu K.P."/>
            <person name="Choudhary V."/>
            <person name="Christoffels A."/>
            <person name="Clutterbuck D.R."/>
            <person name="Crowe M.L."/>
            <person name="Dalla E."/>
            <person name="Dalrymple B.P."/>
            <person name="de Bono B."/>
            <person name="Della Gatta G."/>
            <person name="di Bernardo D."/>
            <person name="Down T."/>
            <person name="Engstrom P."/>
            <person name="Fagiolini M."/>
            <person name="Faulkner G."/>
            <person name="Fletcher C.F."/>
            <person name="Fukushima T."/>
            <person name="Furuno M."/>
            <person name="Futaki S."/>
            <person name="Gariboldi M."/>
            <person name="Georgii-Hemming P."/>
            <person name="Gingeras T.R."/>
            <person name="Gojobori T."/>
            <person name="Green R.E."/>
            <person name="Gustincich S."/>
            <person name="Harbers M."/>
            <person name="Hayashi Y."/>
            <person name="Hensch T.K."/>
            <person name="Hirokawa N."/>
            <person name="Hill D."/>
            <person name="Huminiecki L."/>
            <person name="Iacono M."/>
            <person name="Ikeo K."/>
            <person name="Iwama A."/>
            <person name="Ishikawa T."/>
            <person name="Jakt M."/>
            <person name="Kanapin A."/>
            <person name="Katoh M."/>
            <person name="Kawasawa Y."/>
            <person name="Kelso J."/>
            <person name="Kitamura H."/>
            <person name="Kitano H."/>
            <person name="Kollias G."/>
            <person name="Krishnan S.P."/>
            <person name="Kruger A."/>
            <person name="Kummerfeld S.K."/>
            <person name="Kurochkin I.V."/>
            <person name="Lareau L.F."/>
            <person name="Lazarevic D."/>
            <person name="Lipovich L."/>
            <person name="Liu J."/>
            <person name="Liuni S."/>
            <person name="McWilliam S."/>
            <person name="Madan Babu M."/>
            <person name="Madera M."/>
            <person name="Marchionni L."/>
            <person name="Matsuda H."/>
            <person name="Matsuzawa S."/>
            <person name="Miki H."/>
            <person name="Mignone F."/>
            <person name="Miyake S."/>
            <person name="Morris K."/>
            <person name="Mottagui-Tabar S."/>
            <person name="Mulder N."/>
            <person name="Nakano N."/>
            <person name="Nakauchi H."/>
            <person name="Ng P."/>
            <person name="Nilsson R."/>
            <person name="Nishiguchi S."/>
            <person name="Nishikawa S."/>
            <person name="Nori F."/>
            <person name="Ohara O."/>
            <person name="Okazaki Y."/>
            <person name="Orlando V."/>
            <person name="Pang K.C."/>
            <person name="Pavan W.J."/>
            <person name="Pavesi G."/>
            <person name="Pesole G."/>
            <person name="Petrovsky N."/>
            <person name="Piazza S."/>
            <person name="Reed J."/>
            <person name="Reid J.F."/>
            <person name="Ring B.Z."/>
            <person name="Ringwald M."/>
            <person name="Rost B."/>
            <person name="Ruan Y."/>
            <person name="Salzberg S.L."/>
            <person name="Sandelin A."/>
            <person name="Schneider C."/>
            <person name="Schoenbach C."/>
            <person name="Sekiguchi K."/>
            <person name="Semple C.A."/>
            <person name="Seno S."/>
            <person name="Sessa L."/>
            <person name="Sheng Y."/>
            <person name="Shibata Y."/>
            <person name="Shimada H."/>
            <person name="Shimada K."/>
            <person name="Silva D."/>
            <person name="Sinclair B."/>
            <person name="Sperling S."/>
            <person name="Stupka E."/>
            <person name="Sugiura K."/>
            <person name="Sultana R."/>
            <person name="Takenaka Y."/>
            <person name="Taki K."/>
            <person name="Tammoja K."/>
            <person name="Tan S.L."/>
            <person name="Tang S."/>
            <person name="Taylor M.S."/>
            <person name="Tegner J."/>
            <person name="Teichmann S.A."/>
            <person name="Ueda H.R."/>
            <person name="van Nimwegen E."/>
            <person name="Verardo R."/>
            <person name="Wei C.L."/>
            <person name="Yagi K."/>
            <person name="Yamanishi H."/>
            <person name="Zabarovsky E."/>
            <person name="Zhu S."/>
            <person name="Zimmer A."/>
            <person name="Hide W."/>
            <person name="Bult C."/>
            <person name="Grimmond S.M."/>
            <person name="Teasdale R.D."/>
            <person name="Liu E.T."/>
            <person name="Brusic V."/>
            <person name="Quackenbush J."/>
            <person name="Wahlestedt C."/>
            <person name="Mattick J.S."/>
            <person name="Hume D.A."/>
            <person name="Kai C."/>
            <person name="Sasaki D."/>
            <person name="Tomaru Y."/>
            <person name="Fukuda S."/>
            <person name="Kanamori-Katayama M."/>
            <person name="Suzuki M."/>
            <person name="Aoki J."/>
            <person name="Arakawa T."/>
            <person name="Iida J."/>
            <person name="Imamura K."/>
            <person name="Itoh M."/>
            <person name="Kato T."/>
            <person name="Kawaji H."/>
            <person name="Kawagashira N."/>
            <person name="Kawashima T."/>
            <person name="Kojima M."/>
            <person name="Kondo S."/>
            <person name="Konno H."/>
            <person name="Nakano K."/>
            <person name="Ninomiya N."/>
            <person name="Nishio T."/>
            <person name="Okada M."/>
            <person name="Plessy C."/>
            <person name="Shibata K."/>
            <person name="Shiraki T."/>
            <person name="Suzuki S."/>
            <person name="Tagami M."/>
            <person name="Waki K."/>
            <person name="Watahiki A."/>
            <person name="Okamura-Oho Y."/>
            <person name="Suzuki H."/>
            <person name="Kawai J."/>
            <person name="Hayashizaki Y."/>
        </authorList>
    </citation>
    <scope>NUCLEOTIDE SEQUENCE [LARGE SCALE MRNA] (ISOFORMS 1 AND 2)</scope>
    <source>
        <strain>C57BL/6J</strain>
        <strain>NOD</strain>
        <tissue>Cerebellum</tissue>
        <tissue>Head</tissue>
        <tissue>Lung</tissue>
        <tissue>Mammary gland</tissue>
        <tissue>Small intestine</tissue>
        <tissue>Thymus</tissue>
    </source>
</reference>
<reference key="2">
    <citation type="journal article" date="2004" name="Genome Res.">
        <title>The status, quality, and expansion of the NIH full-length cDNA project: the Mammalian Gene Collection (MGC).</title>
        <authorList>
            <consortium name="The MGC Project Team"/>
        </authorList>
    </citation>
    <scope>NUCLEOTIDE SEQUENCE [LARGE SCALE MRNA] (ISOFORM 1)</scope>
    <source>
        <tissue>Eye</tissue>
    </source>
</reference>
<reference key="3">
    <citation type="journal article" date="2017" name="PLoS ONE">
        <title>Molecular identification of transmembrane protein 68 as an endoplasmic reticulum-anchored and brain-specific protein.</title>
        <authorList>
            <person name="Chang P."/>
            <person name="Heier C."/>
            <person name="Qin W."/>
            <person name="Han L."/>
            <person name="Huang F."/>
            <person name="Sun Q."/>
        </authorList>
    </citation>
    <scope>SUBCELLULAR LOCATION</scope>
    <scope>TISSUE SPECIFICITY</scope>
</reference>
<reference key="4">
    <citation type="journal article" date="2023" name="Int. J. Mol. Sci.">
        <title>Transmembrane Protein 68 Functions as an MGAT and DGAT Enzyme for Triacylglycerol Biosynthesis.</title>
        <authorList>
            <person name="Wang Y."/>
            <person name="Zeng F."/>
            <person name="Zhao Z."/>
            <person name="He L."/>
            <person name="He X."/>
            <person name="Pang H."/>
            <person name="Huang F."/>
            <person name="Chang P."/>
        </authorList>
    </citation>
    <scope>FUNCTION</scope>
    <scope>CATALYTIC ACTIVITY</scope>
    <scope>SUBCELLULAR LOCATION</scope>
</reference>
<reference key="5">
    <citation type="journal article" date="2023" name="Nature">
        <title>Identification of an alternative triglyceride biosynthesis pathway.</title>
        <authorList>
            <person name="McLelland G.L."/>
            <person name="Lopez-Osias M."/>
            <person name="Verzijl C.R.C."/>
            <person name="Ellenbroek B.D."/>
            <person name="Oliveira R.A."/>
            <person name="Boon N.J."/>
            <person name="Dekker M."/>
            <person name="van den Hengel L.G."/>
            <person name="Ali R."/>
            <person name="Janssen H."/>
            <person name="Song J.Y."/>
            <person name="Krimpenfort P."/>
            <person name="van Zutphen T."/>
            <person name="Jonker J.W."/>
            <person name="Brummelkamp T.R."/>
        </authorList>
    </citation>
    <scope>FUNCTION</scope>
    <scope>DISRUPTION PHENOTYPE</scope>
</reference>